<evidence type="ECO:0000255" key="1"/>
<evidence type="ECO:0000269" key="2">
    <source>
    </source>
</evidence>
<evidence type="ECO:0000305" key="3"/>
<evidence type="ECO:0000305" key="4">
    <source>
    </source>
</evidence>
<reference key="1">
    <citation type="journal article" date="1997" name="DNA Res.">
        <title>Structural analysis of Arabidopsis thaliana chromosome 5. I. Sequence features of the 1.6 Mb regions covered by twenty physically assigned P1 clones.</title>
        <authorList>
            <person name="Sato S."/>
            <person name="Kotani H."/>
            <person name="Nakamura Y."/>
            <person name="Kaneko T."/>
            <person name="Asamizu E."/>
            <person name="Fukami M."/>
            <person name="Miyajima N."/>
            <person name="Tabata S."/>
        </authorList>
    </citation>
    <scope>NUCLEOTIDE SEQUENCE [LARGE SCALE GENOMIC DNA]</scope>
    <source>
        <strain>cv. Columbia</strain>
    </source>
</reference>
<reference key="2">
    <citation type="journal article" date="2017" name="Plant J.">
        <title>Araport11: a complete reannotation of the Arabidopsis thaliana reference genome.</title>
        <authorList>
            <person name="Cheng C.Y."/>
            <person name="Krishnakumar V."/>
            <person name="Chan A.P."/>
            <person name="Thibaud-Nissen F."/>
            <person name="Schobel S."/>
            <person name="Town C.D."/>
        </authorList>
    </citation>
    <scope>GENOME REANNOTATION</scope>
    <source>
        <strain>cv. Columbia</strain>
    </source>
</reference>
<reference key="3">
    <citation type="submission" date="2004-02" db="EMBL/GenBank/DDBJ databases">
        <title>Arabidopsis ORF clones.</title>
        <authorList>
            <person name="Cheuk R.F."/>
            <person name="Chen H."/>
            <person name="Kim C.J."/>
            <person name="Shinn P."/>
            <person name="Ecker J.R."/>
        </authorList>
    </citation>
    <scope>NUCLEOTIDE SEQUENCE [LARGE SCALE MRNA]</scope>
    <source>
        <strain>cv. Columbia</strain>
    </source>
</reference>
<reference key="4">
    <citation type="submission" date="2004-06" db="EMBL/GenBank/DDBJ databases">
        <title>Arabidopsis ORF clones.</title>
        <authorList>
            <person name="Cheuk R.F."/>
            <person name="Chen H."/>
            <person name="Kim C.J."/>
            <person name="Shinn P."/>
            <person name="Ecker J.R."/>
        </authorList>
    </citation>
    <scope>NUCLEOTIDE SEQUENCE [LARGE SCALE MRNA]</scope>
    <source>
        <strain>cv. Columbia</strain>
    </source>
</reference>
<reference key="5">
    <citation type="journal article" date="2009" name="Plant Cell Physiol.">
        <title>The F8H glycosyltransferase is a functional paralog of FRA8 involved in glucuronoxylan biosynthesis in Arabidopsis.</title>
        <authorList>
            <person name="Lee C."/>
            <person name="Teng Q."/>
            <person name="Huang W."/>
            <person name="Zhong R."/>
            <person name="Ye Z.H."/>
        </authorList>
    </citation>
    <scope>FUNCTION</scope>
    <scope>SUBCELLULAR LOCATION</scope>
    <scope>TISSUE SPECIFICITY</scope>
    <scope>DISRUPTION PHENOTYPE</scope>
</reference>
<feature type="chain" id="PRO_0000407575" description="Probable glucuronoxylan glucuronosyltransferase F8H">
    <location>
        <begin position="1"/>
        <end position="469"/>
    </location>
</feature>
<feature type="topological domain" description="Cytoplasmic" evidence="1">
    <location>
        <begin position="1"/>
        <end position="36"/>
    </location>
</feature>
<feature type="transmembrane region" description="Helical; Signal-anchor for type II membrane protein" evidence="1">
    <location>
        <begin position="37"/>
        <end position="57"/>
    </location>
</feature>
<feature type="topological domain" description="Lumenal" evidence="1">
    <location>
        <begin position="58"/>
        <end position="469"/>
    </location>
</feature>
<feature type="glycosylation site" description="N-linked (GlcNAc...) asparagine" evidence="1">
    <location>
        <position position="171"/>
    </location>
</feature>
<feature type="glycosylation site" description="N-linked (GlcNAc...) asparagine" evidence="1">
    <location>
        <position position="203"/>
    </location>
</feature>
<feature type="glycosylation site" description="N-linked (GlcNAc...) asparagine" evidence="1">
    <location>
        <position position="301"/>
    </location>
</feature>
<feature type="glycosylation site" description="N-linked (GlcNAc...) asparagine" evidence="1">
    <location>
        <position position="411"/>
    </location>
</feature>
<gene>
    <name type="primary">F8H</name>
    <name type="ordered locus">At5g22940</name>
    <name type="ORF">MRN17.17</name>
</gene>
<proteinExistence type="evidence at transcript level"/>
<name>F8H_ARATH</name>
<accession>Q6NMM8</accession>
<accession>Q9FFB4</accession>
<keyword id="KW-0961">Cell wall biogenesis/degradation</keyword>
<keyword id="KW-0325">Glycoprotein</keyword>
<keyword id="KW-0328">Glycosyltransferase</keyword>
<keyword id="KW-0333">Golgi apparatus</keyword>
<keyword id="KW-0472">Membrane</keyword>
<keyword id="KW-1185">Reference proteome</keyword>
<keyword id="KW-0735">Signal-anchor</keyword>
<keyword id="KW-0808">Transferase</keyword>
<keyword id="KW-0812">Transmembrane</keyword>
<keyword id="KW-1133">Transmembrane helix</keyword>
<comment type="function">
    <text evidence="2">Involved in the synthesis of the hemicellulose glucuronoxylan, a major component of secondary cell walls. Probably involved in the synthesis of the glycosyl sequence at the glucuronoxylan reducing end.</text>
</comment>
<comment type="subcellular location">
    <subcellularLocation>
        <location evidence="4">Golgi apparatus membrane</location>
        <topology evidence="4">Single-pass type II membrane protein</topology>
    </subcellularLocation>
</comment>
<comment type="tissue specificity">
    <text evidence="2">Expressed in xylem cells in stems and in roots.</text>
</comment>
<comment type="disruption phenotype">
    <text evidence="2">No visible phenotype.</text>
</comment>
<comment type="similarity">
    <text evidence="3">Belongs to the glycosyltransferase 47 family.</text>
</comment>
<comment type="sequence caution" evidence="3">
    <conflict type="erroneous gene model prediction">
        <sequence resource="EMBL-CDS" id="BAB10615"/>
    </conflict>
</comment>
<organism>
    <name type="scientific">Arabidopsis thaliana</name>
    <name type="common">Mouse-ear cress</name>
    <dbReference type="NCBI Taxonomy" id="3702"/>
    <lineage>
        <taxon>Eukaryota</taxon>
        <taxon>Viridiplantae</taxon>
        <taxon>Streptophyta</taxon>
        <taxon>Embryophyta</taxon>
        <taxon>Tracheophyta</taxon>
        <taxon>Spermatophyta</taxon>
        <taxon>Magnoliopsida</taxon>
        <taxon>eudicotyledons</taxon>
        <taxon>Gunneridae</taxon>
        <taxon>Pentapetalae</taxon>
        <taxon>rosids</taxon>
        <taxon>malvids</taxon>
        <taxon>Brassicales</taxon>
        <taxon>Brassicaceae</taxon>
        <taxon>Camelineae</taxon>
        <taxon>Arabidopsis</taxon>
    </lineage>
</organism>
<dbReference type="EC" id="2.4.1.-"/>
<dbReference type="EMBL" id="AB005243">
    <property type="protein sequence ID" value="BAB10615.1"/>
    <property type="status" value="ALT_SEQ"/>
    <property type="molecule type" value="Genomic_DNA"/>
</dbReference>
<dbReference type="EMBL" id="CP002688">
    <property type="protein sequence ID" value="AED93099.1"/>
    <property type="molecule type" value="Genomic_DNA"/>
</dbReference>
<dbReference type="EMBL" id="BT011629">
    <property type="protein sequence ID" value="AAS47635.1"/>
    <property type="molecule type" value="mRNA"/>
</dbReference>
<dbReference type="EMBL" id="BT014962">
    <property type="protein sequence ID" value="AAT47813.1"/>
    <property type="molecule type" value="mRNA"/>
</dbReference>
<dbReference type="RefSeq" id="NP_001330046.1">
    <property type="nucleotide sequence ID" value="NM_001343782.1"/>
</dbReference>
<dbReference type="RefSeq" id="NP_197685.2">
    <property type="nucleotide sequence ID" value="NM_122200.4"/>
</dbReference>
<dbReference type="SMR" id="Q6NMM8"/>
<dbReference type="FunCoup" id="Q6NMM8">
    <property type="interactions" value="4"/>
</dbReference>
<dbReference type="STRING" id="3702.Q6NMM8"/>
<dbReference type="CAZy" id="GT47">
    <property type="family name" value="Glycosyltransferase Family 47"/>
</dbReference>
<dbReference type="GlyCosmos" id="Q6NMM8">
    <property type="glycosylation" value="4 sites, No reported glycans"/>
</dbReference>
<dbReference type="GlyGen" id="Q6NMM8">
    <property type="glycosylation" value="4 sites"/>
</dbReference>
<dbReference type="PaxDb" id="3702-AT5G22940.1"/>
<dbReference type="EnsemblPlants" id="AT5G22940.1">
    <property type="protein sequence ID" value="AT5G22940.1"/>
    <property type="gene ID" value="AT5G22940"/>
</dbReference>
<dbReference type="GeneID" id="832358"/>
<dbReference type="Gramene" id="AT5G22940.1">
    <property type="protein sequence ID" value="AT5G22940.1"/>
    <property type="gene ID" value="AT5G22940"/>
</dbReference>
<dbReference type="KEGG" id="ath:AT5G22940"/>
<dbReference type="Araport" id="AT5G22940"/>
<dbReference type="TAIR" id="AT5G22940">
    <property type="gene designation" value="F8H"/>
</dbReference>
<dbReference type="eggNOG" id="KOG1021">
    <property type="taxonomic scope" value="Eukaryota"/>
</dbReference>
<dbReference type="HOGENOM" id="CLU_039682_1_0_1"/>
<dbReference type="InParanoid" id="Q6NMM8"/>
<dbReference type="OMA" id="GHNKRNL"/>
<dbReference type="PhylomeDB" id="Q6NMM8"/>
<dbReference type="PRO" id="PR:Q6NMM8"/>
<dbReference type="Proteomes" id="UP000006548">
    <property type="component" value="Chromosome 5"/>
</dbReference>
<dbReference type="ExpressionAtlas" id="Q6NMM8">
    <property type="expression patterns" value="baseline and differential"/>
</dbReference>
<dbReference type="GO" id="GO:0005794">
    <property type="term" value="C:Golgi apparatus"/>
    <property type="evidence" value="ECO:0000314"/>
    <property type="project" value="TAIR"/>
</dbReference>
<dbReference type="GO" id="GO:0000139">
    <property type="term" value="C:Golgi membrane"/>
    <property type="evidence" value="ECO:0007669"/>
    <property type="project" value="UniProtKB-SubCell"/>
</dbReference>
<dbReference type="GO" id="GO:0016757">
    <property type="term" value="F:glycosyltransferase activity"/>
    <property type="evidence" value="ECO:0007669"/>
    <property type="project" value="UniProtKB-KW"/>
</dbReference>
<dbReference type="GO" id="GO:0071555">
    <property type="term" value="P:cell wall organization"/>
    <property type="evidence" value="ECO:0007669"/>
    <property type="project" value="UniProtKB-KW"/>
</dbReference>
<dbReference type="GO" id="GO:0006486">
    <property type="term" value="P:protein glycosylation"/>
    <property type="evidence" value="ECO:0007669"/>
    <property type="project" value="InterPro"/>
</dbReference>
<dbReference type="InterPro" id="IPR004263">
    <property type="entry name" value="Exostosin"/>
</dbReference>
<dbReference type="InterPro" id="IPR040911">
    <property type="entry name" value="Exostosin_GT47"/>
</dbReference>
<dbReference type="PANTHER" id="PTHR11062">
    <property type="entry name" value="EXOSTOSIN HEPARAN SULFATE GLYCOSYLTRANSFERASE -RELATED"/>
    <property type="match status" value="1"/>
</dbReference>
<dbReference type="PANTHER" id="PTHR11062:SF393">
    <property type="entry name" value="GLUCURONOXYLAN GLUCURONOSYLTRANSFERASE F8H-RELATED"/>
    <property type="match status" value="1"/>
</dbReference>
<dbReference type="Pfam" id="PF03016">
    <property type="entry name" value="Exostosin_GT47"/>
    <property type="match status" value="1"/>
</dbReference>
<sequence length="469" mass="53809">MSLDIKKPNITKTKKKKTGFVVKMQLNNNRGGNKRNIFIFFFFRNYYTWILWFCLSLYFFTSYFSVEDQSSPSSIRLLSNHKTSSSLPSRALIESSAIKTTSIGLFTGMKIYVYDLPASYNDDWVTASDRCASHLFAAEVAIHRALLSSDVRTLDPDEADYFFVPVYVSCNFSTSNGFPSLSHARSLLSSAVDFLSDHYPFWNRSQGSDHVFVASHDFGACFHAMEDMAIEEGIPKFMKRSIILQTFGVKYKHPCQEVEHVVIPPYIPPESVQKAIEKAPVNGRRDIWAFFRGKMEVNPKNISGRFYSKGVRTAILKKFGGRRRFYLNRHRFAGYRSEIVRSVFCLCPLGWAPWSPRLVESAVLGCVPVVIADGIQLPFSETVQWPEISLTVAEKDVRNLRKVLEHVAATNLSAIQRNLHEPVFKRALLYNVPMKEGDATWHILESLWRKLDDRSYRRSRVLSQREVDM</sequence>
<protein>
    <recommendedName>
        <fullName>Probable glucuronoxylan glucuronosyltransferase F8H</fullName>
        <ecNumber>2.4.1.-</ecNumber>
    </recommendedName>
    <alternativeName>
        <fullName>FRA8 homolog</fullName>
    </alternativeName>
    <alternativeName>
        <fullName>Protein FRAGILE FIBER 8 homolog</fullName>
    </alternativeName>
</protein>